<feature type="chain" id="PRO_1000142480" description="Large ribosomal subunit protein uL5">
    <location>
        <begin position="1"/>
        <end position="179"/>
    </location>
</feature>
<accession>B1JIX3</accession>
<gene>
    <name evidence="1" type="primary">rplE</name>
    <name type="ordered locus">YPK_0295</name>
</gene>
<reference key="1">
    <citation type="submission" date="2008-02" db="EMBL/GenBank/DDBJ databases">
        <title>Complete sequence of Yersinia pseudotuberculosis YPIII.</title>
        <authorList>
            <consortium name="US DOE Joint Genome Institute"/>
            <person name="Copeland A."/>
            <person name="Lucas S."/>
            <person name="Lapidus A."/>
            <person name="Glavina del Rio T."/>
            <person name="Dalin E."/>
            <person name="Tice H."/>
            <person name="Bruce D."/>
            <person name="Goodwin L."/>
            <person name="Pitluck S."/>
            <person name="Munk A.C."/>
            <person name="Brettin T."/>
            <person name="Detter J.C."/>
            <person name="Han C."/>
            <person name="Tapia R."/>
            <person name="Schmutz J."/>
            <person name="Larimer F."/>
            <person name="Land M."/>
            <person name="Hauser L."/>
            <person name="Challacombe J.F."/>
            <person name="Green L."/>
            <person name="Lindler L.E."/>
            <person name="Nikolich M.P."/>
            <person name="Richardson P."/>
        </authorList>
    </citation>
    <scope>NUCLEOTIDE SEQUENCE [LARGE SCALE GENOMIC DNA]</scope>
    <source>
        <strain>YPIII</strain>
    </source>
</reference>
<evidence type="ECO:0000255" key="1">
    <source>
        <dbReference type="HAMAP-Rule" id="MF_01333"/>
    </source>
</evidence>
<evidence type="ECO:0000305" key="2"/>
<organism>
    <name type="scientific">Yersinia pseudotuberculosis serotype O:3 (strain YPIII)</name>
    <dbReference type="NCBI Taxonomy" id="502800"/>
    <lineage>
        <taxon>Bacteria</taxon>
        <taxon>Pseudomonadati</taxon>
        <taxon>Pseudomonadota</taxon>
        <taxon>Gammaproteobacteria</taxon>
        <taxon>Enterobacterales</taxon>
        <taxon>Yersiniaceae</taxon>
        <taxon>Yersinia</taxon>
    </lineage>
</organism>
<comment type="function">
    <text evidence="1">This is one of the proteins that bind and probably mediate the attachment of the 5S RNA into the large ribosomal subunit, where it forms part of the central protuberance. In the 70S ribosome it contacts protein S13 of the 30S subunit (bridge B1b), connecting the 2 subunits; this bridge is implicated in subunit movement. Contacts the P site tRNA; the 5S rRNA and some of its associated proteins might help stabilize positioning of ribosome-bound tRNAs.</text>
</comment>
<comment type="subunit">
    <text evidence="1">Part of the 50S ribosomal subunit; part of the 5S rRNA/L5/L18/L25 subcomplex. Contacts the 5S rRNA and the P site tRNA. Forms a bridge to the 30S subunit in the 70S ribosome.</text>
</comment>
<comment type="similarity">
    <text evidence="1">Belongs to the universal ribosomal protein uL5 family.</text>
</comment>
<dbReference type="EMBL" id="CP000950">
    <property type="protein sequence ID" value="ACA66608.1"/>
    <property type="molecule type" value="Genomic_DNA"/>
</dbReference>
<dbReference type="RefSeq" id="WP_002213329.1">
    <property type="nucleotide sequence ID" value="NZ_CP009792.1"/>
</dbReference>
<dbReference type="SMR" id="B1JIX3"/>
<dbReference type="GeneID" id="96663184"/>
<dbReference type="KEGG" id="ypy:YPK_0295"/>
<dbReference type="PATRIC" id="fig|502800.11.peg.902"/>
<dbReference type="GO" id="GO:1990904">
    <property type="term" value="C:ribonucleoprotein complex"/>
    <property type="evidence" value="ECO:0007669"/>
    <property type="project" value="UniProtKB-KW"/>
</dbReference>
<dbReference type="GO" id="GO:0005840">
    <property type="term" value="C:ribosome"/>
    <property type="evidence" value="ECO:0007669"/>
    <property type="project" value="UniProtKB-KW"/>
</dbReference>
<dbReference type="GO" id="GO:0019843">
    <property type="term" value="F:rRNA binding"/>
    <property type="evidence" value="ECO:0007669"/>
    <property type="project" value="UniProtKB-UniRule"/>
</dbReference>
<dbReference type="GO" id="GO:0003735">
    <property type="term" value="F:structural constituent of ribosome"/>
    <property type="evidence" value="ECO:0007669"/>
    <property type="project" value="InterPro"/>
</dbReference>
<dbReference type="GO" id="GO:0000049">
    <property type="term" value="F:tRNA binding"/>
    <property type="evidence" value="ECO:0007669"/>
    <property type="project" value="UniProtKB-UniRule"/>
</dbReference>
<dbReference type="GO" id="GO:0006412">
    <property type="term" value="P:translation"/>
    <property type="evidence" value="ECO:0007669"/>
    <property type="project" value="UniProtKB-UniRule"/>
</dbReference>
<dbReference type="FunFam" id="3.30.1440.10:FF:000001">
    <property type="entry name" value="50S ribosomal protein L5"/>
    <property type="match status" value="1"/>
</dbReference>
<dbReference type="Gene3D" id="3.30.1440.10">
    <property type="match status" value="1"/>
</dbReference>
<dbReference type="HAMAP" id="MF_01333_B">
    <property type="entry name" value="Ribosomal_uL5_B"/>
    <property type="match status" value="1"/>
</dbReference>
<dbReference type="InterPro" id="IPR002132">
    <property type="entry name" value="Ribosomal_uL5"/>
</dbReference>
<dbReference type="InterPro" id="IPR020930">
    <property type="entry name" value="Ribosomal_uL5_bac-type"/>
</dbReference>
<dbReference type="InterPro" id="IPR031309">
    <property type="entry name" value="Ribosomal_uL5_C"/>
</dbReference>
<dbReference type="InterPro" id="IPR022803">
    <property type="entry name" value="Ribosomal_uL5_dom_sf"/>
</dbReference>
<dbReference type="InterPro" id="IPR031310">
    <property type="entry name" value="Ribosomal_uL5_N"/>
</dbReference>
<dbReference type="NCBIfam" id="NF000585">
    <property type="entry name" value="PRK00010.1"/>
    <property type="match status" value="1"/>
</dbReference>
<dbReference type="PANTHER" id="PTHR11994">
    <property type="entry name" value="60S RIBOSOMAL PROTEIN L11-RELATED"/>
    <property type="match status" value="1"/>
</dbReference>
<dbReference type="Pfam" id="PF00281">
    <property type="entry name" value="Ribosomal_L5"/>
    <property type="match status" value="1"/>
</dbReference>
<dbReference type="Pfam" id="PF00673">
    <property type="entry name" value="Ribosomal_L5_C"/>
    <property type="match status" value="1"/>
</dbReference>
<dbReference type="PIRSF" id="PIRSF002161">
    <property type="entry name" value="Ribosomal_L5"/>
    <property type="match status" value="1"/>
</dbReference>
<dbReference type="SUPFAM" id="SSF55282">
    <property type="entry name" value="RL5-like"/>
    <property type="match status" value="1"/>
</dbReference>
<proteinExistence type="inferred from homology"/>
<keyword id="KW-0687">Ribonucleoprotein</keyword>
<keyword id="KW-0689">Ribosomal protein</keyword>
<keyword id="KW-0694">RNA-binding</keyword>
<keyword id="KW-0699">rRNA-binding</keyword>
<keyword id="KW-0820">tRNA-binding</keyword>
<name>RL5_YERPY</name>
<protein>
    <recommendedName>
        <fullName evidence="1">Large ribosomal subunit protein uL5</fullName>
    </recommendedName>
    <alternativeName>
        <fullName evidence="2">50S ribosomal protein L5</fullName>
    </alternativeName>
</protein>
<sequence length="179" mass="20264">MAKLHDYYKDEVVKQLMSQFGYDSVMQVPRVEKITLNMGVGEAIADKKLLDNAAADLAAISGQKPFITKARKSVAGFKIRQGYPIGCKVTLRGERMWEFFERLITIAVPRIRDFRGLSAKSFDGRGNYSMGVREQIIFPEIDYDKVDRVRGLDITITTTAKSDDEGRALLAAFKFPFRK</sequence>